<evidence type="ECO:0000250" key="1">
    <source>
        <dbReference type="UniProtKB" id="D0C9N8"/>
    </source>
</evidence>
<evidence type="ECO:0000255" key="2">
    <source>
        <dbReference type="HAMAP-Rule" id="MF_02098"/>
    </source>
</evidence>
<evidence type="ECO:0000255" key="3">
    <source>
        <dbReference type="PROSITE-ProRule" id="PRU00465"/>
    </source>
</evidence>
<evidence type="ECO:0000269" key="4">
    <source>
    </source>
</evidence>
<evidence type="ECO:0000305" key="5"/>
<reference key="1">
    <citation type="journal article" date="1996" name="DNA Res.">
        <title>A 460-kb DNA sequence of the Escherichia coli K-12 genome corresponding to the 40.1-50.0 min region on the linkage map.</title>
        <authorList>
            <person name="Itoh T."/>
            <person name="Aiba H."/>
            <person name="Baba T."/>
            <person name="Fujita K."/>
            <person name="Hayashi K."/>
            <person name="Inada T."/>
            <person name="Isono K."/>
            <person name="Kasai H."/>
            <person name="Kimura S."/>
            <person name="Kitakawa M."/>
            <person name="Kitagawa M."/>
            <person name="Makino K."/>
            <person name="Miki T."/>
            <person name="Mizobuchi K."/>
            <person name="Mori H."/>
            <person name="Mori T."/>
            <person name="Motomura K."/>
            <person name="Nakade S."/>
            <person name="Nakamura Y."/>
            <person name="Nashimoto H."/>
            <person name="Nishio Y."/>
            <person name="Oshima T."/>
            <person name="Saito N."/>
            <person name="Sampei G."/>
            <person name="Seki Y."/>
            <person name="Sivasundaram S."/>
            <person name="Tagami H."/>
            <person name="Takeda J."/>
            <person name="Takemoto K."/>
            <person name="Wada C."/>
            <person name="Yamamoto Y."/>
            <person name="Horiuchi T."/>
        </authorList>
    </citation>
    <scope>NUCLEOTIDE SEQUENCE [LARGE SCALE GENOMIC DNA]</scope>
    <source>
        <strain>K12 / W3110 / ATCC 27325 / DSM 5911</strain>
    </source>
</reference>
<reference key="2">
    <citation type="journal article" date="1997" name="Science">
        <title>The complete genome sequence of Escherichia coli K-12.</title>
        <authorList>
            <person name="Blattner F.R."/>
            <person name="Plunkett G. III"/>
            <person name="Bloch C.A."/>
            <person name="Perna N.T."/>
            <person name="Burland V."/>
            <person name="Riley M."/>
            <person name="Collado-Vides J."/>
            <person name="Glasner J.D."/>
            <person name="Rode C.K."/>
            <person name="Mayhew G.F."/>
            <person name="Gregor J."/>
            <person name="Davis N.W."/>
            <person name="Kirkpatrick H.A."/>
            <person name="Goeden M.A."/>
            <person name="Rose D.J."/>
            <person name="Mau B."/>
            <person name="Shao Y."/>
        </authorList>
    </citation>
    <scope>NUCLEOTIDE SEQUENCE [LARGE SCALE GENOMIC DNA]</scope>
    <source>
        <strain>K12 / MG1655 / ATCC 47076</strain>
    </source>
</reference>
<reference key="3">
    <citation type="journal article" date="2006" name="Mol. Syst. Biol.">
        <title>Highly accurate genome sequences of Escherichia coli K-12 strains MG1655 and W3110.</title>
        <authorList>
            <person name="Hayashi K."/>
            <person name="Morooka N."/>
            <person name="Yamamoto Y."/>
            <person name="Fujita K."/>
            <person name="Isono K."/>
            <person name="Choi S."/>
            <person name="Ohtsubo E."/>
            <person name="Baba T."/>
            <person name="Wanner B.L."/>
            <person name="Mori H."/>
            <person name="Horiuchi T."/>
        </authorList>
    </citation>
    <scope>NUCLEOTIDE SEQUENCE [LARGE SCALE GENOMIC DNA]</scope>
    <source>
        <strain>K12 / W3110 / ATCC 27325 / DSM 5911</strain>
    </source>
</reference>
<reference key="4">
    <citation type="journal article" date="2014" name="Cell Metab.">
        <title>Gamma-butyrobetaine is a proatherogenic intermediate in gut microbial metabolism of L-carnitine to TMAO.</title>
        <authorList>
            <person name="Koeth R.A."/>
            <person name="Levison B.S."/>
            <person name="Culley M.K."/>
            <person name="Buffa J.A."/>
            <person name="Wang Z."/>
            <person name="Gregory J.C."/>
            <person name="Org E."/>
            <person name="Wu Y."/>
            <person name="Li L."/>
            <person name="Smith J.D."/>
            <person name="Tang W.H."/>
            <person name="DiDonato J.A."/>
            <person name="Lusis A.J."/>
            <person name="Hazen S.L."/>
        </authorList>
    </citation>
    <scope>FUNCTION</scope>
    <scope>CATALYTIC ACTIVITY</scope>
    <scope>PATHWAY</scope>
    <source>
        <strain>K12 / DH10B</strain>
    </source>
</reference>
<gene>
    <name type="primary">yeaX</name>
    <name type="ordered locus">b1803</name>
    <name type="ordered locus">JW1792</name>
</gene>
<protein>
    <recommendedName>
        <fullName evidence="2 5">Carnitine monooxygenase reductase subunit</fullName>
        <ecNumber evidence="2 4">1.14.13.239</ecNumber>
    </recommendedName>
    <alternativeName>
        <fullName evidence="2 5">Carnitine monooxygenase beta subunit</fullName>
    </alternativeName>
</protein>
<proteinExistence type="evidence at protein level"/>
<comment type="function">
    <text evidence="4">Converts carnitine to trimethylamine and malic semialdehyde. Can also use gamma-butyrobetaine, choline and betaine as substrates.</text>
</comment>
<comment type="catalytic activity">
    <reaction evidence="2 4">
        <text>(R)-carnitine + NADH + O2 + H(+) = (3R)-3-hydroxy-4-oxobutanoate + trimethylamine + NAD(+) + H2O</text>
        <dbReference type="Rhea" id="RHEA:55396"/>
        <dbReference type="ChEBI" id="CHEBI:15377"/>
        <dbReference type="ChEBI" id="CHEBI:15378"/>
        <dbReference type="ChEBI" id="CHEBI:15379"/>
        <dbReference type="ChEBI" id="CHEBI:16347"/>
        <dbReference type="ChEBI" id="CHEBI:57540"/>
        <dbReference type="ChEBI" id="CHEBI:57945"/>
        <dbReference type="ChEBI" id="CHEBI:58389"/>
        <dbReference type="ChEBI" id="CHEBI:138809"/>
        <dbReference type="EC" id="1.14.13.239"/>
    </reaction>
</comment>
<comment type="catalytic activity">
    <reaction evidence="2 4">
        <text>(R)-carnitine + NADPH + O2 + H(+) = (3R)-3-hydroxy-4-oxobutanoate + trimethylamine + NADP(+) + H2O</text>
        <dbReference type="Rhea" id="RHEA:55368"/>
        <dbReference type="ChEBI" id="CHEBI:15377"/>
        <dbReference type="ChEBI" id="CHEBI:15378"/>
        <dbReference type="ChEBI" id="CHEBI:15379"/>
        <dbReference type="ChEBI" id="CHEBI:16347"/>
        <dbReference type="ChEBI" id="CHEBI:57783"/>
        <dbReference type="ChEBI" id="CHEBI:58349"/>
        <dbReference type="ChEBI" id="CHEBI:58389"/>
        <dbReference type="ChEBI" id="CHEBI:138809"/>
        <dbReference type="EC" id="1.14.13.239"/>
    </reaction>
</comment>
<comment type="cofactor">
    <cofactor evidence="2">
        <name>FMN</name>
        <dbReference type="ChEBI" id="CHEBI:58210"/>
    </cofactor>
</comment>
<comment type="cofactor">
    <cofactor evidence="2">
        <name>[2Fe-2S] cluster</name>
        <dbReference type="ChEBI" id="CHEBI:190135"/>
    </cofactor>
    <text evidence="2">Binds 1 2Fe-2S cluster.</text>
</comment>
<comment type="pathway">
    <text evidence="2 4">Amine and polyamine metabolism; carnitine metabolism.</text>
</comment>
<comment type="subunit">
    <text evidence="1">Composed of an oxygenase subunit (yeaW) and a reductase subunit (yeaX).</text>
</comment>
<comment type="similarity">
    <text evidence="2 5">Belongs to the PDR/VanB family. CntB subfamily.</text>
</comment>
<sequence length="321" mass="35661">MSDYQMFEVQVSQVEPLTEQVKRFTLVATDGKPLPAFTGGSHVIVQMSDGDNQYSNAYSLLSSPHDTSCYQIAVRLEENSRGGSRFLHQQVKVGDRLTISTPNNLFALIPSARKHLFIAGGIGITPFLSHMAELQHSDVDWQLHYCSRNPESCAFRDELVQHPQAEKVHLHHSSTGTRLELARLLADIEPGTHVYTCGPEALIEAVRSEAARLDIAADTLHFEQFAIEDKTGDAFTLVLARSGKEFVVPEEMTILQVIENNKAAKVECLCREGVCGTCETAILEGEADHRDQYFSDEERASQQSMLICCSRAKGKRLVLDL</sequence>
<organism>
    <name type="scientific">Escherichia coli (strain K12)</name>
    <dbReference type="NCBI Taxonomy" id="83333"/>
    <lineage>
        <taxon>Bacteria</taxon>
        <taxon>Pseudomonadati</taxon>
        <taxon>Pseudomonadota</taxon>
        <taxon>Gammaproteobacteria</taxon>
        <taxon>Enterobacterales</taxon>
        <taxon>Enterobacteriaceae</taxon>
        <taxon>Escherichia</taxon>
    </lineage>
</organism>
<name>CNTB_ECOLI</name>
<accession>P76254</accession>
<accession>O07970</accession>
<accession>O07972</accession>
<feature type="chain" id="PRO_0000189405" description="Carnitine monooxygenase reductase subunit">
    <location>
        <begin position="1"/>
        <end position="321"/>
    </location>
</feature>
<feature type="domain" description="FAD-binding FR-type" evidence="2">
    <location>
        <begin position="4"/>
        <end position="109"/>
    </location>
</feature>
<feature type="domain" description="2Fe-2S ferredoxin-type" evidence="3">
    <location>
        <begin position="233"/>
        <end position="321"/>
    </location>
</feature>
<feature type="binding site" evidence="2">
    <location>
        <position position="270"/>
    </location>
    <ligand>
        <name>[2Fe-2S] cluster</name>
        <dbReference type="ChEBI" id="CHEBI:190135"/>
    </ligand>
</feature>
<feature type="binding site" evidence="2">
    <location>
        <position position="275"/>
    </location>
    <ligand>
        <name>[2Fe-2S] cluster</name>
        <dbReference type="ChEBI" id="CHEBI:190135"/>
    </ligand>
</feature>
<feature type="binding site" evidence="2">
    <location>
        <position position="278"/>
    </location>
    <ligand>
        <name>[2Fe-2S] cluster</name>
        <dbReference type="ChEBI" id="CHEBI:190135"/>
    </ligand>
</feature>
<feature type="binding site" evidence="2">
    <location>
        <position position="308"/>
    </location>
    <ligand>
        <name>[2Fe-2S] cluster</name>
        <dbReference type="ChEBI" id="CHEBI:190135"/>
    </ligand>
</feature>
<keyword id="KW-0001">2Fe-2S</keyword>
<keyword id="KW-0285">Flavoprotein</keyword>
<keyword id="KW-0288">FMN</keyword>
<keyword id="KW-0408">Iron</keyword>
<keyword id="KW-0411">Iron-sulfur</keyword>
<keyword id="KW-0479">Metal-binding</keyword>
<keyword id="KW-0520">NAD</keyword>
<keyword id="KW-0521">NADP</keyword>
<keyword id="KW-0560">Oxidoreductase</keyword>
<keyword id="KW-1185">Reference proteome</keyword>
<dbReference type="EC" id="1.14.13.239" evidence="2 4"/>
<dbReference type="EMBL" id="U00096">
    <property type="protein sequence ID" value="AAC74873.1"/>
    <property type="molecule type" value="Genomic_DNA"/>
</dbReference>
<dbReference type="EMBL" id="AP009048">
    <property type="protein sequence ID" value="BAA15598.1"/>
    <property type="molecule type" value="Genomic_DNA"/>
</dbReference>
<dbReference type="PIR" id="C64941">
    <property type="entry name" value="C64941"/>
</dbReference>
<dbReference type="RefSeq" id="NP_416317.1">
    <property type="nucleotide sequence ID" value="NC_000913.3"/>
</dbReference>
<dbReference type="RefSeq" id="WP_001287026.1">
    <property type="nucleotide sequence ID" value="NZ_SSZK01000001.1"/>
</dbReference>
<dbReference type="SMR" id="P76254"/>
<dbReference type="BioGRID" id="4260337">
    <property type="interactions" value="16"/>
</dbReference>
<dbReference type="FunCoup" id="P76254">
    <property type="interactions" value="184"/>
</dbReference>
<dbReference type="STRING" id="511145.b1803"/>
<dbReference type="BindingDB" id="P76254"/>
<dbReference type="PaxDb" id="511145-b1803"/>
<dbReference type="EnsemblBacteria" id="AAC74873">
    <property type="protein sequence ID" value="AAC74873"/>
    <property type="gene ID" value="b1803"/>
</dbReference>
<dbReference type="GeneID" id="946329"/>
<dbReference type="KEGG" id="ecj:JW1792"/>
<dbReference type="KEGG" id="eco:b1803"/>
<dbReference type="KEGG" id="ecoc:C3026_10275"/>
<dbReference type="PATRIC" id="fig|1411691.4.peg.450"/>
<dbReference type="EchoBASE" id="EB3283"/>
<dbReference type="eggNOG" id="COG1018">
    <property type="taxonomic scope" value="Bacteria"/>
</dbReference>
<dbReference type="HOGENOM" id="CLU_003827_17_0_6"/>
<dbReference type="InParanoid" id="P76254"/>
<dbReference type="OMA" id="CGTCETD"/>
<dbReference type="OrthoDB" id="9796486at2"/>
<dbReference type="PhylomeDB" id="P76254"/>
<dbReference type="BioCyc" id="EcoCyc:G6989-MONOMER"/>
<dbReference type="BioCyc" id="MetaCyc:G6989-MONOMER"/>
<dbReference type="UniPathway" id="UPA00117"/>
<dbReference type="PRO" id="PR:P76254"/>
<dbReference type="Proteomes" id="UP000000625">
    <property type="component" value="Chromosome"/>
</dbReference>
<dbReference type="GO" id="GO:0051537">
    <property type="term" value="F:2 iron, 2 sulfur cluster binding"/>
    <property type="evidence" value="ECO:0007669"/>
    <property type="project" value="UniProtKB-UniRule"/>
</dbReference>
<dbReference type="GO" id="GO:0046872">
    <property type="term" value="F:metal ion binding"/>
    <property type="evidence" value="ECO:0007669"/>
    <property type="project" value="UniProtKB-KW"/>
</dbReference>
<dbReference type="GO" id="GO:0016491">
    <property type="term" value="F:oxidoreductase activity"/>
    <property type="evidence" value="ECO:0000318"/>
    <property type="project" value="GO_Central"/>
</dbReference>
<dbReference type="GO" id="GO:0016709">
    <property type="term" value="F:oxidoreductase activity, acting on paired donors, with incorporation or reduction of molecular oxygen, NAD(P)H as one donor, and incorporation of one atom of oxygen"/>
    <property type="evidence" value="ECO:0007669"/>
    <property type="project" value="UniProtKB-UniRule"/>
</dbReference>
<dbReference type="GO" id="GO:0009437">
    <property type="term" value="P:carnitine metabolic process"/>
    <property type="evidence" value="ECO:0007669"/>
    <property type="project" value="UniProtKB-UniRule"/>
</dbReference>
<dbReference type="CDD" id="cd00207">
    <property type="entry name" value="fer2"/>
    <property type="match status" value="1"/>
</dbReference>
<dbReference type="CDD" id="cd06185">
    <property type="entry name" value="PDR_like"/>
    <property type="match status" value="1"/>
</dbReference>
<dbReference type="Gene3D" id="3.10.20.30">
    <property type="match status" value="1"/>
</dbReference>
<dbReference type="Gene3D" id="3.40.50.80">
    <property type="entry name" value="Nucleotide-binding domain of ferredoxin-NADP reductase (FNR) module"/>
    <property type="match status" value="1"/>
</dbReference>
<dbReference type="Gene3D" id="2.40.30.10">
    <property type="entry name" value="Translation factors"/>
    <property type="match status" value="1"/>
</dbReference>
<dbReference type="HAMAP" id="MF_02098">
    <property type="entry name" value="Carnitine_monoox_B"/>
    <property type="match status" value="1"/>
</dbReference>
<dbReference type="InterPro" id="IPR036010">
    <property type="entry name" value="2Fe-2S_ferredoxin-like_sf"/>
</dbReference>
<dbReference type="InterPro" id="IPR001041">
    <property type="entry name" value="2Fe-2S_ferredoxin-type"/>
</dbReference>
<dbReference type="InterPro" id="IPR006058">
    <property type="entry name" value="2Fe2S_fd_BS"/>
</dbReference>
<dbReference type="InterPro" id="IPR012675">
    <property type="entry name" value="Beta-grasp_dom_sf"/>
</dbReference>
<dbReference type="InterPro" id="IPR039003">
    <property type="entry name" value="Carnitine_monoox_B"/>
</dbReference>
<dbReference type="InterPro" id="IPR008333">
    <property type="entry name" value="Cbr1-like_FAD-bd_dom"/>
</dbReference>
<dbReference type="InterPro" id="IPR054582">
    <property type="entry name" value="DmmA-like_N"/>
</dbReference>
<dbReference type="InterPro" id="IPR017927">
    <property type="entry name" value="FAD-bd_FR_type"/>
</dbReference>
<dbReference type="InterPro" id="IPR039261">
    <property type="entry name" value="FNR_nucleotide-bd"/>
</dbReference>
<dbReference type="InterPro" id="IPR050415">
    <property type="entry name" value="MRET"/>
</dbReference>
<dbReference type="InterPro" id="IPR017938">
    <property type="entry name" value="Riboflavin_synthase-like_b-brl"/>
</dbReference>
<dbReference type="PANTHER" id="PTHR47354:SF1">
    <property type="entry name" value="CARNITINE MONOOXYGENASE REDUCTASE SUBUNIT"/>
    <property type="match status" value="1"/>
</dbReference>
<dbReference type="PANTHER" id="PTHR47354">
    <property type="entry name" value="NADH OXIDOREDUCTASE HCR"/>
    <property type="match status" value="1"/>
</dbReference>
<dbReference type="Pfam" id="PF22290">
    <property type="entry name" value="DmmA-like_N"/>
    <property type="match status" value="1"/>
</dbReference>
<dbReference type="Pfam" id="PF00970">
    <property type="entry name" value="FAD_binding_6"/>
    <property type="match status" value="1"/>
</dbReference>
<dbReference type="Pfam" id="PF00111">
    <property type="entry name" value="Fer2"/>
    <property type="match status" value="1"/>
</dbReference>
<dbReference type="PRINTS" id="PR00409">
    <property type="entry name" value="PHDIOXRDTASE"/>
</dbReference>
<dbReference type="SUPFAM" id="SSF54292">
    <property type="entry name" value="2Fe-2S ferredoxin-like"/>
    <property type="match status" value="1"/>
</dbReference>
<dbReference type="SUPFAM" id="SSF52343">
    <property type="entry name" value="Ferredoxin reductase-like, C-terminal NADP-linked domain"/>
    <property type="match status" value="1"/>
</dbReference>
<dbReference type="SUPFAM" id="SSF63380">
    <property type="entry name" value="Riboflavin synthase domain-like"/>
    <property type="match status" value="1"/>
</dbReference>
<dbReference type="PROSITE" id="PS00197">
    <property type="entry name" value="2FE2S_FER_1"/>
    <property type="match status" value="1"/>
</dbReference>
<dbReference type="PROSITE" id="PS51085">
    <property type="entry name" value="2FE2S_FER_2"/>
    <property type="match status" value="1"/>
</dbReference>
<dbReference type="PROSITE" id="PS51384">
    <property type="entry name" value="FAD_FR"/>
    <property type="match status" value="1"/>
</dbReference>